<gene>
    <name evidence="1" type="primary">rpsI</name>
    <name evidence="1" type="synonym">rps9</name>
    <name type="ordered locus">AM1_1249</name>
</gene>
<dbReference type="EMBL" id="CP000828">
    <property type="protein sequence ID" value="ABW26286.1"/>
    <property type="molecule type" value="Genomic_DNA"/>
</dbReference>
<dbReference type="RefSeq" id="WP_012161830.1">
    <property type="nucleotide sequence ID" value="NC_009925.1"/>
</dbReference>
<dbReference type="SMR" id="B0C426"/>
<dbReference type="STRING" id="329726.AM1_1249"/>
<dbReference type="KEGG" id="amr:AM1_1249"/>
<dbReference type="eggNOG" id="COG0103">
    <property type="taxonomic scope" value="Bacteria"/>
</dbReference>
<dbReference type="HOGENOM" id="CLU_046483_2_1_3"/>
<dbReference type="OrthoDB" id="9803965at2"/>
<dbReference type="Proteomes" id="UP000000268">
    <property type="component" value="Chromosome"/>
</dbReference>
<dbReference type="GO" id="GO:0022627">
    <property type="term" value="C:cytosolic small ribosomal subunit"/>
    <property type="evidence" value="ECO:0007669"/>
    <property type="project" value="TreeGrafter"/>
</dbReference>
<dbReference type="GO" id="GO:0003723">
    <property type="term" value="F:RNA binding"/>
    <property type="evidence" value="ECO:0007669"/>
    <property type="project" value="TreeGrafter"/>
</dbReference>
<dbReference type="GO" id="GO:0003735">
    <property type="term" value="F:structural constituent of ribosome"/>
    <property type="evidence" value="ECO:0007669"/>
    <property type="project" value="InterPro"/>
</dbReference>
<dbReference type="GO" id="GO:0006412">
    <property type="term" value="P:translation"/>
    <property type="evidence" value="ECO:0007669"/>
    <property type="project" value="UniProtKB-UniRule"/>
</dbReference>
<dbReference type="FunFam" id="3.30.230.10:FF:000001">
    <property type="entry name" value="30S ribosomal protein S9"/>
    <property type="match status" value="1"/>
</dbReference>
<dbReference type="Gene3D" id="3.30.230.10">
    <property type="match status" value="1"/>
</dbReference>
<dbReference type="HAMAP" id="MF_00532_B">
    <property type="entry name" value="Ribosomal_uS9_B"/>
    <property type="match status" value="1"/>
</dbReference>
<dbReference type="InterPro" id="IPR020568">
    <property type="entry name" value="Ribosomal_Su5_D2-typ_SF"/>
</dbReference>
<dbReference type="InterPro" id="IPR000754">
    <property type="entry name" value="Ribosomal_uS9"/>
</dbReference>
<dbReference type="InterPro" id="IPR023035">
    <property type="entry name" value="Ribosomal_uS9_bac/plastid"/>
</dbReference>
<dbReference type="InterPro" id="IPR020574">
    <property type="entry name" value="Ribosomal_uS9_CS"/>
</dbReference>
<dbReference type="InterPro" id="IPR014721">
    <property type="entry name" value="Ribsml_uS5_D2-typ_fold_subgr"/>
</dbReference>
<dbReference type="NCBIfam" id="NF001099">
    <property type="entry name" value="PRK00132.1"/>
    <property type="match status" value="1"/>
</dbReference>
<dbReference type="PANTHER" id="PTHR21569">
    <property type="entry name" value="RIBOSOMAL PROTEIN S9"/>
    <property type="match status" value="1"/>
</dbReference>
<dbReference type="PANTHER" id="PTHR21569:SF1">
    <property type="entry name" value="SMALL RIBOSOMAL SUBUNIT PROTEIN US9M"/>
    <property type="match status" value="1"/>
</dbReference>
<dbReference type="Pfam" id="PF00380">
    <property type="entry name" value="Ribosomal_S9"/>
    <property type="match status" value="1"/>
</dbReference>
<dbReference type="SUPFAM" id="SSF54211">
    <property type="entry name" value="Ribosomal protein S5 domain 2-like"/>
    <property type="match status" value="1"/>
</dbReference>
<dbReference type="PROSITE" id="PS00360">
    <property type="entry name" value="RIBOSOMAL_S9"/>
    <property type="match status" value="1"/>
</dbReference>
<keyword id="KW-1185">Reference proteome</keyword>
<keyword id="KW-0687">Ribonucleoprotein</keyword>
<keyword id="KW-0689">Ribosomal protein</keyword>
<organism>
    <name type="scientific">Acaryochloris marina (strain MBIC 11017)</name>
    <dbReference type="NCBI Taxonomy" id="329726"/>
    <lineage>
        <taxon>Bacteria</taxon>
        <taxon>Bacillati</taxon>
        <taxon>Cyanobacteriota</taxon>
        <taxon>Cyanophyceae</taxon>
        <taxon>Acaryochloridales</taxon>
        <taxon>Acaryochloridaceae</taxon>
        <taxon>Acaryochloris</taxon>
    </lineage>
</organism>
<accession>B0C426</accession>
<name>RS9_ACAM1</name>
<reference key="1">
    <citation type="journal article" date="2008" name="Proc. Natl. Acad. Sci. U.S.A.">
        <title>Niche adaptation and genome expansion in the chlorophyll d-producing cyanobacterium Acaryochloris marina.</title>
        <authorList>
            <person name="Swingley W.D."/>
            <person name="Chen M."/>
            <person name="Cheung P.C."/>
            <person name="Conrad A.L."/>
            <person name="Dejesa L.C."/>
            <person name="Hao J."/>
            <person name="Honchak B.M."/>
            <person name="Karbach L.E."/>
            <person name="Kurdoglu A."/>
            <person name="Lahiri S."/>
            <person name="Mastrian S.D."/>
            <person name="Miyashita H."/>
            <person name="Page L."/>
            <person name="Ramakrishna P."/>
            <person name="Satoh S."/>
            <person name="Sattley W.M."/>
            <person name="Shimada Y."/>
            <person name="Taylor H.L."/>
            <person name="Tomo T."/>
            <person name="Tsuchiya T."/>
            <person name="Wang Z.T."/>
            <person name="Raymond J."/>
            <person name="Mimuro M."/>
            <person name="Blankenship R.E."/>
            <person name="Touchman J.W."/>
        </authorList>
    </citation>
    <scope>NUCLEOTIDE SEQUENCE [LARGE SCALE GENOMIC DNA]</scope>
    <source>
        <strain>MBIC 11017</strain>
    </source>
</reference>
<protein>
    <recommendedName>
        <fullName evidence="1">Small ribosomal subunit protein uS9</fullName>
    </recommendedName>
    <alternativeName>
        <fullName evidence="3">30S ribosomal protein S9</fullName>
    </alternativeName>
</protein>
<feature type="chain" id="PRO_1000081801" description="Small ribosomal subunit protein uS9">
    <location>
        <begin position="1"/>
        <end position="137"/>
    </location>
</feature>
<feature type="region of interest" description="Disordered" evidence="2">
    <location>
        <begin position="118"/>
        <end position="137"/>
    </location>
</feature>
<evidence type="ECO:0000255" key="1">
    <source>
        <dbReference type="HAMAP-Rule" id="MF_00532"/>
    </source>
</evidence>
<evidence type="ECO:0000256" key="2">
    <source>
        <dbReference type="SAM" id="MobiDB-lite"/>
    </source>
</evidence>
<evidence type="ECO:0000305" key="3"/>
<comment type="similarity">
    <text evidence="1">Belongs to the universal ribosomal protein uS9 family.</text>
</comment>
<proteinExistence type="inferred from homology"/>
<sequence>MQATDQSNAVAYRGTGRRKSSIVRVRLVPGSGVMTINGKPGDLYLQFNPSYIANAKAPLESLGLENDYDVLVNARGGGLTGQADAIKLGVARALCELDPENRKPLKLEGYLTRDPRAKERKKYGLRKARKAPQYSKR</sequence>